<comment type="function">
    <text evidence="1">Part of the ABC transporter complex AraFGH involved in arabinose import. Responsible for energy coupling to the transport system.</text>
</comment>
<comment type="catalytic activity">
    <reaction evidence="1">
        <text>L-arabinose(out) + ATP + H2O = L-arabinose(in) + ADP + phosphate + H(+)</text>
        <dbReference type="Rhea" id="RHEA:30007"/>
        <dbReference type="ChEBI" id="CHEBI:15377"/>
        <dbReference type="ChEBI" id="CHEBI:15378"/>
        <dbReference type="ChEBI" id="CHEBI:17535"/>
        <dbReference type="ChEBI" id="CHEBI:30616"/>
        <dbReference type="ChEBI" id="CHEBI:43474"/>
        <dbReference type="ChEBI" id="CHEBI:456216"/>
        <dbReference type="EC" id="7.5.2.12"/>
    </reaction>
</comment>
<comment type="subunit">
    <text evidence="1">The complex is composed of two ATP-binding proteins (AraG), two transmembrane proteins (AraH) and a solute-binding protein (AraF).</text>
</comment>
<comment type="subcellular location">
    <subcellularLocation>
        <location evidence="1">Cell inner membrane</location>
        <topology evidence="1">Peripheral membrane protein</topology>
    </subcellularLocation>
</comment>
<comment type="similarity">
    <text evidence="1">Belongs to the ABC transporter superfamily. Arabinose importer (TC 3.A.1.2.2) family.</text>
</comment>
<comment type="sequence caution" evidence="2">
    <conflict type="erroneous initiation">
        <sequence resource="EMBL-CDS" id="AAN80772"/>
    </conflict>
</comment>
<proteinExistence type="inferred from homology"/>
<feature type="chain" id="PRO_0000091938" description="Arabinose import ATP-binding protein AraG">
    <location>
        <begin position="1"/>
        <end position="504"/>
    </location>
</feature>
<feature type="domain" description="ABC transporter 1" evidence="1">
    <location>
        <begin position="8"/>
        <end position="243"/>
    </location>
</feature>
<feature type="domain" description="ABC transporter 2" evidence="1">
    <location>
        <begin position="256"/>
        <end position="499"/>
    </location>
</feature>
<feature type="binding site" evidence="1">
    <location>
        <begin position="40"/>
        <end position="47"/>
    </location>
    <ligand>
        <name>ATP</name>
        <dbReference type="ChEBI" id="CHEBI:30616"/>
    </ligand>
</feature>
<protein>
    <recommendedName>
        <fullName evidence="1">Arabinose import ATP-binding protein AraG</fullName>
        <ecNumber evidence="1">7.5.2.12</ecNumber>
    </recommendedName>
</protein>
<evidence type="ECO:0000255" key="1">
    <source>
        <dbReference type="HAMAP-Rule" id="MF_01721"/>
    </source>
</evidence>
<evidence type="ECO:0000305" key="2"/>
<dbReference type="EC" id="7.5.2.12" evidence="1"/>
<dbReference type="EMBL" id="AE014075">
    <property type="protein sequence ID" value="AAN80772.1"/>
    <property type="status" value="ALT_INIT"/>
    <property type="molecule type" value="Genomic_DNA"/>
</dbReference>
<dbReference type="RefSeq" id="WP_001187819.1">
    <property type="nucleotide sequence ID" value="NZ_CP051263.1"/>
</dbReference>
<dbReference type="SMR" id="P0AAF4"/>
<dbReference type="STRING" id="199310.c2313"/>
<dbReference type="DNASU" id="1036917"/>
<dbReference type="GeneID" id="75171970"/>
<dbReference type="KEGG" id="ecc:c2313"/>
<dbReference type="eggNOG" id="COG1129">
    <property type="taxonomic scope" value="Bacteria"/>
</dbReference>
<dbReference type="HOGENOM" id="CLU_000604_92_3_6"/>
<dbReference type="Proteomes" id="UP000001410">
    <property type="component" value="Chromosome"/>
</dbReference>
<dbReference type="GO" id="GO:0005886">
    <property type="term" value="C:plasma membrane"/>
    <property type="evidence" value="ECO:0007669"/>
    <property type="project" value="UniProtKB-SubCell"/>
</dbReference>
<dbReference type="GO" id="GO:0015612">
    <property type="term" value="F:ABC-type L-arabinose transporter activity"/>
    <property type="evidence" value="ECO:0007669"/>
    <property type="project" value="UniProtKB-EC"/>
</dbReference>
<dbReference type="GO" id="GO:0005524">
    <property type="term" value="F:ATP binding"/>
    <property type="evidence" value="ECO:0007669"/>
    <property type="project" value="UniProtKB-KW"/>
</dbReference>
<dbReference type="GO" id="GO:0016887">
    <property type="term" value="F:ATP hydrolysis activity"/>
    <property type="evidence" value="ECO:0007669"/>
    <property type="project" value="InterPro"/>
</dbReference>
<dbReference type="CDD" id="cd03216">
    <property type="entry name" value="ABC_Carb_Monos_I"/>
    <property type="match status" value="1"/>
</dbReference>
<dbReference type="CDD" id="cd03215">
    <property type="entry name" value="ABC_Carb_Monos_II"/>
    <property type="match status" value="1"/>
</dbReference>
<dbReference type="FunFam" id="3.40.50.300:FF:000126">
    <property type="entry name" value="Galactose/methyl galactoside import ATP-binding protein MglA"/>
    <property type="match status" value="1"/>
</dbReference>
<dbReference type="FunFam" id="3.40.50.300:FF:000127">
    <property type="entry name" value="Ribose import ATP-binding protein RbsA"/>
    <property type="match status" value="1"/>
</dbReference>
<dbReference type="Gene3D" id="3.40.50.300">
    <property type="entry name" value="P-loop containing nucleotide triphosphate hydrolases"/>
    <property type="match status" value="2"/>
</dbReference>
<dbReference type="InterPro" id="IPR003593">
    <property type="entry name" value="AAA+_ATPase"/>
</dbReference>
<dbReference type="InterPro" id="IPR050107">
    <property type="entry name" value="ABC_carbohydrate_import_ATPase"/>
</dbReference>
<dbReference type="InterPro" id="IPR003439">
    <property type="entry name" value="ABC_transporter-like_ATP-bd"/>
</dbReference>
<dbReference type="InterPro" id="IPR017871">
    <property type="entry name" value="ABC_transporter-like_CS"/>
</dbReference>
<dbReference type="InterPro" id="IPR027417">
    <property type="entry name" value="P-loop_NTPase"/>
</dbReference>
<dbReference type="NCBIfam" id="NF008442">
    <property type="entry name" value="PRK11288.1"/>
    <property type="match status" value="1"/>
</dbReference>
<dbReference type="PANTHER" id="PTHR43790:SF6">
    <property type="entry name" value="ARABINOSE IMPORT ATP-BINDING PROTEIN ARAG"/>
    <property type="match status" value="1"/>
</dbReference>
<dbReference type="PANTHER" id="PTHR43790">
    <property type="entry name" value="CARBOHYDRATE TRANSPORT ATP-BINDING PROTEIN MG119-RELATED"/>
    <property type="match status" value="1"/>
</dbReference>
<dbReference type="Pfam" id="PF00005">
    <property type="entry name" value="ABC_tran"/>
    <property type="match status" value="2"/>
</dbReference>
<dbReference type="SMART" id="SM00382">
    <property type="entry name" value="AAA"/>
    <property type="match status" value="2"/>
</dbReference>
<dbReference type="SUPFAM" id="SSF52540">
    <property type="entry name" value="P-loop containing nucleoside triphosphate hydrolases"/>
    <property type="match status" value="2"/>
</dbReference>
<dbReference type="PROSITE" id="PS00211">
    <property type="entry name" value="ABC_TRANSPORTER_1"/>
    <property type="match status" value="1"/>
</dbReference>
<dbReference type="PROSITE" id="PS50893">
    <property type="entry name" value="ABC_TRANSPORTER_2"/>
    <property type="match status" value="2"/>
</dbReference>
<dbReference type="PROSITE" id="PS51268">
    <property type="entry name" value="ARAG"/>
    <property type="match status" value="1"/>
</dbReference>
<reference key="1">
    <citation type="journal article" date="2002" name="Proc. Natl. Acad. Sci. U.S.A.">
        <title>Extensive mosaic structure revealed by the complete genome sequence of uropathogenic Escherichia coli.</title>
        <authorList>
            <person name="Welch R.A."/>
            <person name="Burland V."/>
            <person name="Plunkett G. III"/>
            <person name="Redford P."/>
            <person name="Roesch P."/>
            <person name="Rasko D."/>
            <person name="Buckles E.L."/>
            <person name="Liou S.-R."/>
            <person name="Boutin A."/>
            <person name="Hackett J."/>
            <person name="Stroud D."/>
            <person name="Mayhew G.F."/>
            <person name="Rose D.J."/>
            <person name="Zhou S."/>
            <person name="Schwartz D.C."/>
            <person name="Perna N.T."/>
            <person name="Mobley H.L.T."/>
            <person name="Donnenberg M.S."/>
            <person name="Blattner F.R."/>
        </authorList>
    </citation>
    <scope>NUCLEOTIDE SEQUENCE [LARGE SCALE GENOMIC DNA]</scope>
    <source>
        <strain>CFT073 / ATCC 700928 / UPEC</strain>
    </source>
</reference>
<sequence>MQQSTPYLSFRGIGKTFPGVKALTDISFDCYAGQVHALMGENGAGKSTLLKILSGNYAPTTGSVVINGQEMSFSDTTAALNAGVAIIYQELHLVPEMTVAENIYLGQLPHKGGIVNRSLLNYEAGLQLKHLGMDIDPDTPLKYLSIGQWQMVEIAKALARNAKIIAFDEPTSSLSAREIDNLFRVIRELRKEGRVILYVSHRMEEIFALSDAITVFKDGRYVKTFTDMQQVDHDALVQAMVGRDIGDIYGWQPRSYGEERLRLDAVKAPGVRTPISLAVRSGEIVGLFGLVGAGRSELMKGMFGGTQITAGQVYIDQQPIDIRKPSHAIAAGMMLCPEDRKAEGIIPVHSVRDNINISARRKHVLGGCVINNGWEENNADHHIRSLNIKTPGAEQLIMNLSGGNQQKAILGRWLSEEMKVILLDEPTRGIDVGAKHEIYNVIYALAAQGVAVLFASSDLPEVLGVADRIVVMREGEIAGELLHEQADERQALSLAMPKVSQAVA</sequence>
<gene>
    <name evidence="1" type="primary">araG</name>
    <name type="ordered locus">c2313</name>
</gene>
<keyword id="KW-0067">ATP-binding</keyword>
<keyword id="KW-0997">Cell inner membrane</keyword>
<keyword id="KW-1003">Cell membrane</keyword>
<keyword id="KW-0472">Membrane</keyword>
<keyword id="KW-0547">Nucleotide-binding</keyword>
<keyword id="KW-1185">Reference proteome</keyword>
<keyword id="KW-0677">Repeat</keyword>
<keyword id="KW-0762">Sugar transport</keyword>
<keyword id="KW-1278">Translocase</keyword>
<keyword id="KW-0813">Transport</keyword>
<accession>P0AAF4</accession>
<accession>P08531</accession>
<organism>
    <name type="scientific">Escherichia coli O6:H1 (strain CFT073 / ATCC 700928 / UPEC)</name>
    <dbReference type="NCBI Taxonomy" id="199310"/>
    <lineage>
        <taxon>Bacteria</taxon>
        <taxon>Pseudomonadati</taxon>
        <taxon>Pseudomonadota</taxon>
        <taxon>Gammaproteobacteria</taxon>
        <taxon>Enterobacterales</taxon>
        <taxon>Enterobacteriaceae</taxon>
        <taxon>Escherichia</taxon>
    </lineage>
</organism>
<name>ARAG_ECOL6</name>